<feature type="chain" id="PRO_0000248757" description="Proline--tRNA ligase">
    <location>
        <begin position="1"/>
        <end position="575"/>
    </location>
</feature>
<evidence type="ECO:0000255" key="1">
    <source>
        <dbReference type="HAMAP-Rule" id="MF_01569"/>
    </source>
</evidence>
<name>SYP_SACD2</name>
<comment type="function">
    <text evidence="1">Catalyzes the attachment of proline to tRNA(Pro) in a two-step reaction: proline is first activated by ATP to form Pro-AMP and then transferred to the acceptor end of tRNA(Pro). As ProRS can inadvertently accommodate and process non-cognate amino acids such as alanine and cysteine, to avoid such errors it has two additional distinct editing activities against alanine. One activity is designated as 'pretransfer' editing and involves the tRNA(Pro)-independent hydrolysis of activated Ala-AMP. The other activity is designated 'posttransfer' editing and involves deacylation of mischarged Ala-tRNA(Pro). The misacylated Cys-tRNA(Pro) is not edited by ProRS.</text>
</comment>
<comment type="catalytic activity">
    <reaction evidence="1">
        <text>tRNA(Pro) + L-proline + ATP = L-prolyl-tRNA(Pro) + AMP + diphosphate</text>
        <dbReference type="Rhea" id="RHEA:14305"/>
        <dbReference type="Rhea" id="RHEA-COMP:9700"/>
        <dbReference type="Rhea" id="RHEA-COMP:9702"/>
        <dbReference type="ChEBI" id="CHEBI:30616"/>
        <dbReference type="ChEBI" id="CHEBI:33019"/>
        <dbReference type="ChEBI" id="CHEBI:60039"/>
        <dbReference type="ChEBI" id="CHEBI:78442"/>
        <dbReference type="ChEBI" id="CHEBI:78532"/>
        <dbReference type="ChEBI" id="CHEBI:456215"/>
        <dbReference type="EC" id="6.1.1.15"/>
    </reaction>
</comment>
<comment type="subunit">
    <text evidence="1">Homodimer.</text>
</comment>
<comment type="subcellular location">
    <subcellularLocation>
        <location evidence="1">Cytoplasm</location>
    </subcellularLocation>
</comment>
<comment type="domain">
    <text evidence="1">Consists of three domains: the N-terminal catalytic domain, the editing domain and the C-terminal anticodon-binding domain.</text>
</comment>
<comment type="similarity">
    <text evidence="1">Belongs to the class-II aminoacyl-tRNA synthetase family. ProS type 1 subfamily.</text>
</comment>
<protein>
    <recommendedName>
        <fullName evidence="1">Proline--tRNA ligase</fullName>
        <ecNumber evidence="1">6.1.1.15</ecNumber>
    </recommendedName>
    <alternativeName>
        <fullName evidence="1">Prolyl-tRNA synthetase</fullName>
        <shortName evidence="1">ProRS</shortName>
    </alternativeName>
</protein>
<reference key="1">
    <citation type="journal article" date="2008" name="PLoS Genet.">
        <title>Complete genome sequence of the complex carbohydrate-degrading marine bacterium, Saccharophagus degradans strain 2-40 T.</title>
        <authorList>
            <person name="Weiner R.M."/>
            <person name="Taylor L.E. II"/>
            <person name="Henrissat B."/>
            <person name="Hauser L."/>
            <person name="Land M."/>
            <person name="Coutinho P.M."/>
            <person name="Rancurel C."/>
            <person name="Saunders E.H."/>
            <person name="Longmire A.G."/>
            <person name="Zhang H."/>
            <person name="Bayer E.A."/>
            <person name="Gilbert H.J."/>
            <person name="Larimer F."/>
            <person name="Zhulin I.B."/>
            <person name="Ekborg N.A."/>
            <person name="Lamed R."/>
            <person name="Richardson P.M."/>
            <person name="Borovok I."/>
            <person name="Hutcheson S."/>
        </authorList>
    </citation>
    <scope>NUCLEOTIDE SEQUENCE [LARGE SCALE GENOMIC DNA]</scope>
    <source>
        <strain>2-40 / ATCC 43961 / DSM 17024</strain>
    </source>
</reference>
<dbReference type="EC" id="6.1.1.15" evidence="1"/>
<dbReference type="EMBL" id="CP000282">
    <property type="protein sequence ID" value="ABD80171.1"/>
    <property type="molecule type" value="Genomic_DNA"/>
</dbReference>
<dbReference type="RefSeq" id="WP_011467392.1">
    <property type="nucleotide sequence ID" value="NC_007912.1"/>
</dbReference>
<dbReference type="SMR" id="Q21MA8"/>
<dbReference type="STRING" id="203122.Sde_0909"/>
<dbReference type="GeneID" id="98612590"/>
<dbReference type="KEGG" id="sde:Sde_0909"/>
<dbReference type="eggNOG" id="COG0442">
    <property type="taxonomic scope" value="Bacteria"/>
</dbReference>
<dbReference type="HOGENOM" id="CLU_016739_0_0_6"/>
<dbReference type="OrthoDB" id="9809052at2"/>
<dbReference type="Proteomes" id="UP000001947">
    <property type="component" value="Chromosome"/>
</dbReference>
<dbReference type="GO" id="GO:0005829">
    <property type="term" value="C:cytosol"/>
    <property type="evidence" value="ECO:0007669"/>
    <property type="project" value="TreeGrafter"/>
</dbReference>
<dbReference type="GO" id="GO:0002161">
    <property type="term" value="F:aminoacyl-tRNA deacylase activity"/>
    <property type="evidence" value="ECO:0007669"/>
    <property type="project" value="InterPro"/>
</dbReference>
<dbReference type="GO" id="GO:0005524">
    <property type="term" value="F:ATP binding"/>
    <property type="evidence" value="ECO:0007669"/>
    <property type="project" value="UniProtKB-UniRule"/>
</dbReference>
<dbReference type="GO" id="GO:0004827">
    <property type="term" value="F:proline-tRNA ligase activity"/>
    <property type="evidence" value="ECO:0007669"/>
    <property type="project" value="UniProtKB-UniRule"/>
</dbReference>
<dbReference type="GO" id="GO:0006433">
    <property type="term" value="P:prolyl-tRNA aminoacylation"/>
    <property type="evidence" value="ECO:0007669"/>
    <property type="project" value="UniProtKB-UniRule"/>
</dbReference>
<dbReference type="CDD" id="cd04334">
    <property type="entry name" value="ProRS-INS"/>
    <property type="match status" value="1"/>
</dbReference>
<dbReference type="CDD" id="cd00861">
    <property type="entry name" value="ProRS_anticodon_short"/>
    <property type="match status" value="1"/>
</dbReference>
<dbReference type="CDD" id="cd00779">
    <property type="entry name" value="ProRS_core_prok"/>
    <property type="match status" value="1"/>
</dbReference>
<dbReference type="FunFam" id="3.30.930.10:FF:000043">
    <property type="entry name" value="Proline--tRNA ligase"/>
    <property type="match status" value="1"/>
</dbReference>
<dbReference type="FunFam" id="3.30.930.10:FF:000097">
    <property type="entry name" value="Proline--tRNA ligase"/>
    <property type="match status" value="1"/>
</dbReference>
<dbReference type="Gene3D" id="3.40.50.800">
    <property type="entry name" value="Anticodon-binding domain"/>
    <property type="match status" value="1"/>
</dbReference>
<dbReference type="Gene3D" id="3.30.930.10">
    <property type="entry name" value="Bira Bifunctional Protein, Domain 2"/>
    <property type="match status" value="2"/>
</dbReference>
<dbReference type="Gene3D" id="3.90.960.10">
    <property type="entry name" value="YbaK/aminoacyl-tRNA synthetase-associated domain"/>
    <property type="match status" value="1"/>
</dbReference>
<dbReference type="HAMAP" id="MF_01569">
    <property type="entry name" value="Pro_tRNA_synth_type1"/>
    <property type="match status" value="1"/>
</dbReference>
<dbReference type="InterPro" id="IPR002314">
    <property type="entry name" value="aa-tRNA-synt_IIb"/>
</dbReference>
<dbReference type="InterPro" id="IPR006195">
    <property type="entry name" value="aa-tRNA-synth_II"/>
</dbReference>
<dbReference type="InterPro" id="IPR045864">
    <property type="entry name" value="aa-tRNA-synth_II/BPL/LPL"/>
</dbReference>
<dbReference type="InterPro" id="IPR004154">
    <property type="entry name" value="Anticodon-bd"/>
</dbReference>
<dbReference type="InterPro" id="IPR036621">
    <property type="entry name" value="Anticodon-bd_dom_sf"/>
</dbReference>
<dbReference type="InterPro" id="IPR002316">
    <property type="entry name" value="Pro-tRNA-ligase_IIa"/>
</dbReference>
<dbReference type="InterPro" id="IPR004500">
    <property type="entry name" value="Pro-tRNA-synth_IIa_bac-type"/>
</dbReference>
<dbReference type="InterPro" id="IPR023717">
    <property type="entry name" value="Pro-tRNA-Synthase_IIa_type1"/>
</dbReference>
<dbReference type="InterPro" id="IPR050062">
    <property type="entry name" value="Pro-tRNA_synthetase"/>
</dbReference>
<dbReference type="InterPro" id="IPR044140">
    <property type="entry name" value="ProRS_anticodon_short"/>
</dbReference>
<dbReference type="InterPro" id="IPR033730">
    <property type="entry name" value="ProRS_core_prok"/>
</dbReference>
<dbReference type="InterPro" id="IPR036754">
    <property type="entry name" value="YbaK/aa-tRNA-synt-asso_dom_sf"/>
</dbReference>
<dbReference type="InterPro" id="IPR007214">
    <property type="entry name" value="YbaK/aa-tRNA-synth-assoc-dom"/>
</dbReference>
<dbReference type="NCBIfam" id="NF006625">
    <property type="entry name" value="PRK09194.1"/>
    <property type="match status" value="1"/>
</dbReference>
<dbReference type="NCBIfam" id="TIGR00409">
    <property type="entry name" value="proS_fam_II"/>
    <property type="match status" value="1"/>
</dbReference>
<dbReference type="PANTHER" id="PTHR42753">
    <property type="entry name" value="MITOCHONDRIAL RIBOSOME PROTEIN L39/PROLYL-TRNA LIGASE FAMILY MEMBER"/>
    <property type="match status" value="1"/>
</dbReference>
<dbReference type="PANTHER" id="PTHR42753:SF2">
    <property type="entry name" value="PROLINE--TRNA LIGASE"/>
    <property type="match status" value="1"/>
</dbReference>
<dbReference type="Pfam" id="PF03129">
    <property type="entry name" value="HGTP_anticodon"/>
    <property type="match status" value="1"/>
</dbReference>
<dbReference type="Pfam" id="PF00587">
    <property type="entry name" value="tRNA-synt_2b"/>
    <property type="match status" value="1"/>
</dbReference>
<dbReference type="Pfam" id="PF04073">
    <property type="entry name" value="tRNA_edit"/>
    <property type="match status" value="1"/>
</dbReference>
<dbReference type="PIRSF" id="PIRSF001535">
    <property type="entry name" value="ProRS_1"/>
    <property type="match status" value="1"/>
</dbReference>
<dbReference type="PRINTS" id="PR01046">
    <property type="entry name" value="TRNASYNTHPRO"/>
</dbReference>
<dbReference type="SUPFAM" id="SSF52954">
    <property type="entry name" value="Class II aaRS ABD-related"/>
    <property type="match status" value="1"/>
</dbReference>
<dbReference type="SUPFAM" id="SSF55681">
    <property type="entry name" value="Class II aaRS and biotin synthetases"/>
    <property type="match status" value="1"/>
</dbReference>
<dbReference type="SUPFAM" id="SSF55826">
    <property type="entry name" value="YbaK/ProRS associated domain"/>
    <property type="match status" value="1"/>
</dbReference>
<dbReference type="PROSITE" id="PS50862">
    <property type="entry name" value="AA_TRNA_LIGASE_II"/>
    <property type="match status" value="1"/>
</dbReference>
<gene>
    <name evidence="1" type="primary">proS</name>
    <name type="ordered locus">Sde_0909</name>
</gene>
<organism>
    <name type="scientific">Saccharophagus degradans (strain 2-40 / ATCC 43961 / DSM 17024)</name>
    <dbReference type="NCBI Taxonomy" id="203122"/>
    <lineage>
        <taxon>Bacteria</taxon>
        <taxon>Pseudomonadati</taxon>
        <taxon>Pseudomonadota</taxon>
        <taxon>Gammaproteobacteria</taxon>
        <taxon>Cellvibrionales</taxon>
        <taxon>Cellvibrionaceae</taxon>
        <taxon>Saccharophagus</taxon>
    </lineage>
</organism>
<proteinExistence type="inferred from homology"/>
<accession>Q21MA8</accession>
<keyword id="KW-0030">Aminoacyl-tRNA synthetase</keyword>
<keyword id="KW-0067">ATP-binding</keyword>
<keyword id="KW-0963">Cytoplasm</keyword>
<keyword id="KW-0436">Ligase</keyword>
<keyword id="KW-0547">Nucleotide-binding</keyword>
<keyword id="KW-0648">Protein biosynthesis</keyword>
<keyword id="KW-1185">Reference proteome</keyword>
<sequence length="575" mass="63477">MRASKYLIATYKETPADAEVISHQLMLRAGLIRKLASGLYNWLPAGLRVLRKVETIVREEMDRAGAQEVLMPVVQPAELWEESGRWQQYGPELLRINDRHDRAFCLGPTHEEVITDLIRNELKSYKQLPANFYQIQTKFRDEVRPRFGVMRAREFLMKDAYSFHASQECLQETYDIMHAAYCKIFDRIGLDYRPVLADTGSIGGTGSHEFHVLADSGEDDIAFSTESNFAANVELAEALAPAKQTAEPLPREEVATPNVKTIEDVAKLLDVPTTQTVKTLIVKGVENEDGKHTLVALVLRGDHALNDIKAIKLAHVANPLEFADESGIKAAVGAEVGSLGPIGLSMPVYVDRAAAALVNFVCGANKDGYHYTNANWSDAAEHKVVDIRNVVIGDPSPCGKGTIDIKRGIEVGHIFQLGTKYSEAMKASVLDENGKDKTMIMGCYGIGVSRIVASAIEQNYDDNGIIWPDAIAPFHVAIVPINMQKSEAVAQKCEELYAQLNQLGYDVLLMDEPKARLGGMLADTELMGIPHRIVVGDRGLEKGQLEYKCRRDSDSQDIAVDDIIEFINNAVKTGK</sequence>